<accession>Q9ZNH4</accession>
<feature type="chain" id="PRO_0000203838" description="Phosphoenolpyruvate carboxykinase (ATP)">
    <location>
        <begin position="1"/>
        <end position="537"/>
    </location>
</feature>
<feature type="binding site" evidence="1">
    <location>
        <position position="61"/>
    </location>
    <ligand>
        <name>substrate</name>
    </ligand>
</feature>
<feature type="binding site" evidence="1">
    <location>
        <position position="195"/>
    </location>
    <ligand>
        <name>substrate</name>
    </ligand>
</feature>
<feature type="binding site" evidence="1">
    <location>
        <position position="201"/>
    </location>
    <ligand>
        <name>ATP</name>
        <dbReference type="ChEBI" id="CHEBI:30616"/>
    </ligand>
</feature>
<feature type="binding site" evidence="1">
    <location>
        <position position="201"/>
    </location>
    <ligand>
        <name>Mn(2+)</name>
        <dbReference type="ChEBI" id="CHEBI:29035"/>
    </ligand>
</feature>
<feature type="binding site" evidence="1">
    <location>
        <position position="201"/>
    </location>
    <ligand>
        <name>substrate</name>
    </ligand>
</feature>
<feature type="binding site" evidence="1">
    <location>
        <position position="220"/>
    </location>
    <ligand>
        <name>ATP</name>
        <dbReference type="ChEBI" id="CHEBI:30616"/>
    </ligand>
</feature>
<feature type="binding site" evidence="1">
    <location>
        <position position="220"/>
    </location>
    <ligand>
        <name>Mn(2+)</name>
        <dbReference type="ChEBI" id="CHEBI:29035"/>
    </ligand>
</feature>
<feature type="binding site" evidence="1">
    <location>
        <begin position="236"/>
        <end position="244"/>
    </location>
    <ligand>
        <name>ATP</name>
        <dbReference type="ChEBI" id="CHEBI:30616"/>
    </ligand>
</feature>
<feature type="binding site" evidence="1">
    <location>
        <position position="257"/>
    </location>
    <ligand>
        <name>Mn(2+)</name>
        <dbReference type="ChEBI" id="CHEBI:29035"/>
    </ligand>
</feature>
<feature type="binding site" evidence="1">
    <location>
        <position position="285"/>
    </location>
    <ligand>
        <name>ATP</name>
        <dbReference type="ChEBI" id="CHEBI:30616"/>
    </ligand>
</feature>
<feature type="binding site" evidence="1">
    <location>
        <position position="323"/>
    </location>
    <ligand>
        <name>ATP</name>
        <dbReference type="ChEBI" id="CHEBI:30616"/>
    </ligand>
</feature>
<feature type="binding site" evidence="1">
    <location>
        <position position="323"/>
    </location>
    <ligand>
        <name>substrate</name>
    </ligand>
</feature>
<feature type="binding site" evidence="1">
    <location>
        <position position="448"/>
    </location>
    <ligand>
        <name>ATP</name>
        <dbReference type="ChEBI" id="CHEBI:30616"/>
    </ligand>
</feature>
<feature type="sequence conflict" description="In Ref. 1; BAA34956." evidence="3" ref="1">
    <original>G</original>
    <variation>S</variation>
    <location>
        <position position="41"/>
    </location>
</feature>
<feature type="sequence conflict" description="In Ref. 1; BAA34956." evidence="3" ref="1">
    <original>A</original>
    <variation>T</variation>
    <location>
        <position position="93"/>
    </location>
</feature>
<feature type="sequence conflict" description="In Ref. 1; BAA34956." evidence="3" ref="1">
    <original>S</original>
    <variation>A</variation>
    <location>
        <position position="282"/>
    </location>
</feature>
<feature type="sequence conflict" description="In Ref. 1; BAA34956." evidence="3" ref="1">
    <original>EL</original>
    <variation>DI</variation>
    <location>
        <begin position="306"/>
        <end position="307"/>
    </location>
</feature>
<feature type="sequence conflict" description="In Ref. 1; BAA34956." evidence="3" ref="1">
    <original>V</original>
    <variation>A</variation>
    <location>
        <position position="536"/>
    </location>
</feature>
<protein>
    <recommendedName>
        <fullName evidence="1">Phosphoenolpyruvate carboxykinase (ATP)</fullName>
        <shortName evidence="1">PCK</shortName>
        <shortName evidence="1">PEP carboxykinase</shortName>
        <shortName evidence="1">PEPCK</shortName>
        <ecNumber evidence="1">4.1.1.49</ecNumber>
    </recommendedName>
</protein>
<proteinExistence type="evidence at protein level"/>
<name>PCKA_RHOPA</name>
<sequence>MQETGVHNGAYGTDKFGLKNLKGVYWNFGAPQLYEHALKNGEAVLSSDGALVADTGVFTGRSPKDKFTVRDATTENTMWWGGNQSITAEQFEALYQDFLKHAEGMTLFAQDLYGGADPTFRIKTRVYTELAWHSLFIRTLLRRPERAELENFVPELTLIDLPSFRADPKRHGCRSENVVAIDFARKIVLIGGTQYAGEMKKSVFTTLNYYLPEKGVLPMHCSANVGPNGDTAIFFGLSGTGKTTLSADPNRTLIGDDEHGWGKDGVFNFEGGCYAKCIKLSSENEPEIYAASTRFGAVLENVVLGELDRKPDFDDGSKTENTRSAYPLESIPNASLTGRAGQPKNVVMLAADAFGVMPPIAKLTPAQAMYHFLSGYTAKVAGTERGVTEPTPEFSTCFGSPFLPRDPSVYGNMLRELIAKHNVDCWLVNTGWTGGIYGTGHRMPIKVTRALLTAALDGSLRNVEFRTDPYFGFAVPTALPGVPSEILDPVKTWADKAAFDTTARKLVGMFQKNFAKFEAQVDAEVRAAAPDVKMAVE</sequence>
<comment type="function">
    <text evidence="1">Involved in the gluconeogenesis. Catalyzes the conversion of oxaloacetate (OAA) to phosphoenolpyruvate (PEP) through direct phosphoryl transfer between the nucleoside triphosphate and OAA.</text>
</comment>
<comment type="catalytic activity">
    <reaction evidence="1">
        <text>oxaloacetate + ATP = phosphoenolpyruvate + ADP + CO2</text>
        <dbReference type="Rhea" id="RHEA:18617"/>
        <dbReference type="ChEBI" id="CHEBI:16452"/>
        <dbReference type="ChEBI" id="CHEBI:16526"/>
        <dbReference type="ChEBI" id="CHEBI:30616"/>
        <dbReference type="ChEBI" id="CHEBI:58702"/>
        <dbReference type="ChEBI" id="CHEBI:456216"/>
        <dbReference type="EC" id="4.1.1.49"/>
    </reaction>
</comment>
<comment type="cofactor">
    <cofactor evidence="1">
        <name>Mn(2+)</name>
        <dbReference type="ChEBI" id="CHEBI:29035"/>
    </cofactor>
    <text evidence="1">Binds 1 Mn(2+) ion per subunit.</text>
</comment>
<comment type="pathway">
    <text evidence="1">Carbohydrate biosynthesis; gluconeogenesis.</text>
</comment>
<comment type="subcellular location">
    <subcellularLocation>
        <location evidence="1">Cytoplasm</location>
    </subcellularLocation>
</comment>
<comment type="developmental stage">
    <text evidence="2">Expressed at high levels during log phase with 10-20 fold reduction at onset of stationary phase.</text>
</comment>
<comment type="similarity">
    <text evidence="1">Belongs to the phosphoenolpyruvate carboxykinase (ATP) family.</text>
</comment>
<keyword id="KW-0067">ATP-binding</keyword>
<keyword id="KW-0963">Cytoplasm</keyword>
<keyword id="KW-0210">Decarboxylase</keyword>
<keyword id="KW-0903">Direct protein sequencing</keyword>
<keyword id="KW-0312">Gluconeogenesis</keyword>
<keyword id="KW-0456">Lyase</keyword>
<keyword id="KW-0464">Manganese</keyword>
<keyword id="KW-0479">Metal-binding</keyword>
<keyword id="KW-0547">Nucleotide-binding</keyword>
<dbReference type="EC" id="4.1.1.49" evidence="1"/>
<dbReference type="EMBL" id="AB015618">
    <property type="protein sequence ID" value="BAA34956.1"/>
    <property type="molecule type" value="Genomic_DNA"/>
</dbReference>
<dbReference type="EMBL" id="BX572594">
    <property type="protein sequence ID" value="CAE25804.1"/>
    <property type="molecule type" value="Genomic_DNA"/>
</dbReference>
<dbReference type="RefSeq" id="WP_011155928.1">
    <property type="nucleotide sequence ID" value="NZ_CP116810.1"/>
</dbReference>
<dbReference type="SMR" id="Q9ZNH4"/>
<dbReference type="STRING" id="258594.RPA0360"/>
<dbReference type="GeneID" id="66891371"/>
<dbReference type="eggNOG" id="COG1866">
    <property type="taxonomic scope" value="Bacteria"/>
</dbReference>
<dbReference type="HOGENOM" id="CLU_018247_0_1_5"/>
<dbReference type="PhylomeDB" id="Q9ZNH4"/>
<dbReference type="UniPathway" id="UPA00138"/>
<dbReference type="GO" id="GO:0005829">
    <property type="term" value="C:cytosol"/>
    <property type="evidence" value="ECO:0007669"/>
    <property type="project" value="TreeGrafter"/>
</dbReference>
<dbReference type="GO" id="GO:0005524">
    <property type="term" value="F:ATP binding"/>
    <property type="evidence" value="ECO:0007669"/>
    <property type="project" value="UniProtKB-UniRule"/>
</dbReference>
<dbReference type="GO" id="GO:0046872">
    <property type="term" value="F:metal ion binding"/>
    <property type="evidence" value="ECO:0007669"/>
    <property type="project" value="UniProtKB-KW"/>
</dbReference>
<dbReference type="GO" id="GO:0004612">
    <property type="term" value="F:phosphoenolpyruvate carboxykinase (ATP) activity"/>
    <property type="evidence" value="ECO:0007669"/>
    <property type="project" value="UniProtKB-UniRule"/>
</dbReference>
<dbReference type="GO" id="GO:0006094">
    <property type="term" value="P:gluconeogenesis"/>
    <property type="evidence" value="ECO:0007669"/>
    <property type="project" value="UniProtKB-UniRule"/>
</dbReference>
<dbReference type="CDD" id="cd00484">
    <property type="entry name" value="PEPCK_ATP"/>
    <property type="match status" value="1"/>
</dbReference>
<dbReference type="Gene3D" id="3.90.228.20">
    <property type="match status" value="1"/>
</dbReference>
<dbReference type="Gene3D" id="3.40.449.10">
    <property type="entry name" value="Phosphoenolpyruvate Carboxykinase, domain 1"/>
    <property type="match status" value="1"/>
</dbReference>
<dbReference type="Gene3D" id="2.170.8.10">
    <property type="entry name" value="Phosphoenolpyruvate Carboxykinase, domain 2"/>
    <property type="match status" value="1"/>
</dbReference>
<dbReference type="HAMAP" id="MF_00453">
    <property type="entry name" value="PEPCK_ATP"/>
    <property type="match status" value="1"/>
</dbReference>
<dbReference type="InterPro" id="IPR001272">
    <property type="entry name" value="PEP_carboxykinase_ATP"/>
</dbReference>
<dbReference type="InterPro" id="IPR013035">
    <property type="entry name" value="PEP_carboxykinase_C"/>
</dbReference>
<dbReference type="InterPro" id="IPR008210">
    <property type="entry name" value="PEP_carboxykinase_N"/>
</dbReference>
<dbReference type="InterPro" id="IPR015994">
    <property type="entry name" value="PEPCK_ATP_CS"/>
</dbReference>
<dbReference type="NCBIfam" id="TIGR00224">
    <property type="entry name" value="pckA"/>
    <property type="match status" value="1"/>
</dbReference>
<dbReference type="NCBIfam" id="NF006820">
    <property type="entry name" value="PRK09344.1-2"/>
    <property type="match status" value="1"/>
</dbReference>
<dbReference type="NCBIfam" id="NF006821">
    <property type="entry name" value="PRK09344.1-3"/>
    <property type="match status" value="1"/>
</dbReference>
<dbReference type="NCBIfam" id="NF006822">
    <property type="entry name" value="PRK09344.1-4"/>
    <property type="match status" value="1"/>
</dbReference>
<dbReference type="PANTHER" id="PTHR30031:SF0">
    <property type="entry name" value="PHOSPHOENOLPYRUVATE CARBOXYKINASE (ATP)"/>
    <property type="match status" value="1"/>
</dbReference>
<dbReference type="PANTHER" id="PTHR30031">
    <property type="entry name" value="PHOSPHOENOLPYRUVATE CARBOXYKINASE ATP"/>
    <property type="match status" value="1"/>
</dbReference>
<dbReference type="Pfam" id="PF01293">
    <property type="entry name" value="PEPCK_ATP"/>
    <property type="match status" value="1"/>
</dbReference>
<dbReference type="PIRSF" id="PIRSF006294">
    <property type="entry name" value="PEP_crbxkin"/>
    <property type="match status" value="1"/>
</dbReference>
<dbReference type="SUPFAM" id="SSF68923">
    <property type="entry name" value="PEP carboxykinase N-terminal domain"/>
    <property type="match status" value="1"/>
</dbReference>
<dbReference type="SUPFAM" id="SSF53795">
    <property type="entry name" value="PEP carboxykinase-like"/>
    <property type="match status" value="1"/>
</dbReference>
<dbReference type="PROSITE" id="PS00532">
    <property type="entry name" value="PEPCK_ATP"/>
    <property type="match status" value="1"/>
</dbReference>
<gene>
    <name evidence="1" type="primary">pckA</name>
    <name type="ordered locus">RPA0360</name>
</gene>
<reference key="1">
    <citation type="journal article" date="1999" name="J. Bacteriol.">
        <title>Molecular and functional characterization of the Rhodopseudomonas palustris no. 7 phosphoenolpyruvate carboxykinase gene.</title>
        <authorList>
            <person name="Inui M."/>
            <person name="Nakata K."/>
            <person name="Roh J.H."/>
            <person name="Zahn K."/>
            <person name="Yukawa H."/>
        </authorList>
    </citation>
    <scope>NUCLEOTIDE SEQUENCE [GENOMIC DNA]</scope>
    <scope>PROTEIN SEQUENCE OF 1-12</scope>
    <scope>DEVELOPMENTAL STAGE</scope>
    <source>
        <strain>7</strain>
    </source>
</reference>
<reference key="2">
    <citation type="journal article" date="2004" name="Nat. Biotechnol.">
        <title>Complete genome sequence of the metabolically versatile photosynthetic bacterium Rhodopseudomonas palustris.</title>
        <authorList>
            <person name="Larimer F.W."/>
            <person name="Chain P."/>
            <person name="Hauser L."/>
            <person name="Lamerdin J.E."/>
            <person name="Malfatti S."/>
            <person name="Do L."/>
            <person name="Land M.L."/>
            <person name="Pelletier D.A."/>
            <person name="Beatty J.T."/>
            <person name="Lang A.S."/>
            <person name="Tabita F.R."/>
            <person name="Gibson J.L."/>
            <person name="Hanson T.E."/>
            <person name="Bobst C."/>
            <person name="Torres y Torres J.L."/>
            <person name="Peres C."/>
            <person name="Harrison F.H."/>
            <person name="Gibson J."/>
            <person name="Harwood C.S."/>
        </authorList>
    </citation>
    <scope>NUCLEOTIDE SEQUENCE [LARGE SCALE GENOMIC DNA]</scope>
    <source>
        <strain>ATCC BAA-98 / CGA009</strain>
    </source>
</reference>
<organism>
    <name type="scientific">Rhodopseudomonas palustris (strain ATCC BAA-98 / CGA009)</name>
    <dbReference type="NCBI Taxonomy" id="258594"/>
    <lineage>
        <taxon>Bacteria</taxon>
        <taxon>Pseudomonadati</taxon>
        <taxon>Pseudomonadota</taxon>
        <taxon>Alphaproteobacteria</taxon>
        <taxon>Hyphomicrobiales</taxon>
        <taxon>Nitrobacteraceae</taxon>
        <taxon>Rhodopseudomonas</taxon>
    </lineage>
</organism>
<evidence type="ECO:0000255" key="1">
    <source>
        <dbReference type="HAMAP-Rule" id="MF_00453"/>
    </source>
</evidence>
<evidence type="ECO:0000269" key="2">
    <source>
    </source>
</evidence>
<evidence type="ECO:0000305" key="3"/>